<sequence length="307" mass="33673">MSLLRLTFLGTSAAQPTLHRNLSGLAVKAHSDLLLFDCGEGSQRQMVRYGTGFTVDAVFFTHFHADHYLGIIGFLRTLGMTGRSEPIHLYGPPSAKRLLHQAVHLGVESMSFPVEIHELKDGDVVPRKGYAVHAVGVDHRINALGYALVEDDRPGRFNLDVARSLGVPEGPSFGKLQRGEPVTLEDGRTVKPEDVLGAPRPGRRLVISGDTRPCPALVKAAKDADLLVHESTFSDDEQERAVETRHSTAREAARVAREAGARRLVLTHLSSRHDTDPSKLLTQAREEYQGPVEVAFDGFTVELPLRD</sequence>
<gene>
    <name evidence="1" type="primary">rnz</name>
    <name type="ordered locus">MXAN_0663</name>
</gene>
<evidence type="ECO:0000255" key="1">
    <source>
        <dbReference type="HAMAP-Rule" id="MF_01818"/>
    </source>
</evidence>
<comment type="function">
    <text evidence="1">Zinc phosphodiesterase, which displays some tRNA 3'-processing endonuclease activity. Probably involved in tRNA maturation, by removing a 3'-trailer from precursor tRNA.</text>
</comment>
<comment type="catalytic activity">
    <reaction evidence="1">
        <text>Endonucleolytic cleavage of RNA, removing extra 3' nucleotides from tRNA precursor, generating 3' termini of tRNAs. A 3'-hydroxy group is left at the tRNA terminus and a 5'-phosphoryl group is left at the trailer molecule.</text>
        <dbReference type="EC" id="3.1.26.11"/>
    </reaction>
</comment>
<comment type="cofactor">
    <cofactor evidence="1">
        <name>Zn(2+)</name>
        <dbReference type="ChEBI" id="CHEBI:29105"/>
    </cofactor>
    <text evidence="1">Binds 2 Zn(2+) ions.</text>
</comment>
<comment type="subunit">
    <text evidence="1">Homodimer.</text>
</comment>
<comment type="similarity">
    <text evidence="1">Belongs to the RNase Z family.</text>
</comment>
<organism>
    <name type="scientific">Myxococcus xanthus (strain DK1622)</name>
    <dbReference type="NCBI Taxonomy" id="246197"/>
    <lineage>
        <taxon>Bacteria</taxon>
        <taxon>Pseudomonadati</taxon>
        <taxon>Myxococcota</taxon>
        <taxon>Myxococcia</taxon>
        <taxon>Myxococcales</taxon>
        <taxon>Cystobacterineae</taxon>
        <taxon>Myxococcaceae</taxon>
        <taxon>Myxococcus</taxon>
    </lineage>
</organism>
<keyword id="KW-0255">Endonuclease</keyword>
<keyword id="KW-0378">Hydrolase</keyword>
<keyword id="KW-0479">Metal-binding</keyword>
<keyword id="KW-0540">Nuclease</keyword>
<keyword id="KW-1185">Reference proteome</keyword>
<keyword id="KW-0819">tRNA processing</keyword>
<keyword id="KW-0862">Zinc</keyword>
<protein>
    <recommendedName>
        <fullName evidence="1">Ribonuclease Z</fullName>
        <shortName evidence="1">RNase Z</shortName>
        <ecNumber evidence="1">3.1.26.11</ecNumber>
    </recommendedName>
    <alternativeName>
        <fullName evidence="1">tRNA 3 endonuclease</fullName>
    </alternativeName>
    <alternativeName>
        <fullName evidence="1">tRNase Z</fullName>
    </alternativeName>
</protein>
<proteinExistence type="inferred from homology"/>
<feature type="chain" id="PRO_1000070308" description="Ribonuclease Z">
    <location>
        <begin position="1"/>
        <end position="307"/>
    </location>
</feature>
<feature type="active site" description="Proton acceptor" evidence="1">
    <location>
        <position position="66"/>
    </location>
</feature>
<feature type="binding site" evidence="1">
    <location>
        <position position="62"/>
    </location>
    <ligand>
        <name>Zn(2+)</name>
        <dbReference type="ChEBI" id="CHEBI:29105"/>
        <label>1</label>
        <note>catalytic</note>
    </ligand>
</feature>
<feature type="binding site" evidence="1">
    <location>
        <position position="64"/>
    </location>
    <ligand>
        <name>Zn(2+)</name>
        <dbReference type="ChEBI" id="CHEBI:29105"/>
        <label>1</label>
        <note>catalytic</note>
    </ligand>
</feature>
<feature type="binding site" evidence="1">
    <location>
        <position position="66"/>
    </location>
    <ligand>
        <name>Zn(2+)</name>
        <dbReference type="ChEBI" id="CHEBI:29105"/>
        <label>2</label>
        <note>catalytic</note>
    </ligand>
</feature>
<feature type="binding site" evidence="1">
    <location>
        <position position="67"/>
    </location>
    <ligand>
        <name>Zn(2+)</name>
        <dbReference type="ChEBI" id="CHEBI:29105"/>
        <label>2</label>
        <note>catalytic</note>
    </ligand>
</feature>
<feature type="binding site" evidence="1">
    <location>
        <position position="139"/>
    </location>
    <ligand>
        <name>Zn(2+)</name>
        <dbReference type="ChEBI" id="CHEBI:29105"/>
        <label>1</label>
        <note>catalytic</note>
    </ligand>
</feature>
<feature type="binding site" evidence="1">
    <location>
        <position position="210"/>
    </location>
    <ligand>
        <name>Zn(2+)</name>
        <dbReference type="ChEBI" id="CHEBI:29105"/>
        <label>1</label>
        <note>catalytic</note>
    </ligand>
</feature>
<feature type="binding site" evidence="1">
    <location>
        <position position="210"/>
    </location>
    <ligand>
        <name>Zn(2+)</name>
        <dbReference type="ChEBI" id="CHEBI:29105"/>
        <label>2</label>
        <note>catalytic</note>
    </ligand>
</feature>
<feature type="binding site" evidence="1">
    <location>
        <position position="268"/>
    </location>
    <ligand>
        <name>Zn(2+)</name>
        <dbReference type="ChEBI" id="CHEBI:29105"/>
        <label>2</label>
        <note>catalytic</note>
    </ligand>
</feature>
<dbReference type="EC" id="3.1.26.11" evidence="1"/>
<dbReference type="EMBL" id="CP000113">
    <property type="protein sequence ID" value="ABF88454.1"/>
    <property type="molecule type" value="Genomic_DNA"/>
</dbReference>
<dbReference type="RefSeq" id="WP_011550794.1">
    <property type="nucleotide sequence ID" value="NC_008095.1"/>
</dbReference>
<dbReference type="SMR" id="Q1DEJ2"/>
<dbReference type="STRING" id="246197.MXAN_0663"/>
<dbReference type="EnsemblBacteria" id="ABF88454">
    <property type="protein sequence ID" value="ABF88454"/>
    <property type="gene ID" value="MXAN_0663"/>
</dbReference>
<dbReference type="GeneID" id="41358138"/>
<dbReference type="KEGG" id="mxa:MXAN_0663"/>
<dbReference type="eggNOG" id="COG1234">
    <property type="taxonomic scope" value="Bacteria"/>
</dbReference>
<dbReference type="HOGENOM" id="CLU_031317_2_1_7"/>
<dbReference type="OrthoDB" id="9800940at2"/>
<dbReference type="Proteomes" id="UP000002402">
    <property type="component" value="Chromosome"/>
</dbReference>
<dbReference type="GO" id="GO:0042781">
    <property type="term" value="F:3'-tRNA processing endoribonuclease activity"/>
    <property type="evidence" value="ECO:0007669"/>
    <property type="project" value="UniProtKB-UniRule"/>
</dbReference>
<dbReference type="GO" id="GO:0008270">
    <property type="term" value="F:zinc ion binding"/>
    <property type="evidence" value="ECO:0007669"/>
    <property type="project" value="UniProtKB-UniRule"/>
</dbReference>
<dbReference type="CDD" id="cd07717">
    <property type="entry name" value="RNaseZ_ZiPD-like_MBL-fold"/>
    <property type="match status" value="1"/>
</dbReference>
<dbReference type="FunFam" id="3.60.15.10:FF:000002">
    <property type="entry name" value="Ribonuclease Z"/>
    <property type="match status" value="1"/>
</dbReference>
<dbReference type="Gene3D" id="3.60.15.10">
    <property type="entry name" value="Ribonuclease Z/Hydroxyacylglutathione hydrolase-like"/>
    <property type="match status" value="1"/>
</dbReference>
<dbReference type="HAMAP" id="MF_01818">
    <property type="entry name" value="RNase_Z_BN"/>
    <property type="match status" value="1"/>
</dbReference>
<dbReference type="InterPro" id="IPR001279">
    <property type="entry name" value="Metallo-B-lactamas"/>
</dbReference>
<dbReference type="InterPro" id="IPR036866">
    <property type="entry name" value="RibonucZ/Hydroxyglut_hydro"/>
</dbReference>
<dbReference type="InterPro" id="IPR013471">
    <property type="entry name" value="RNase_Z/BN"/>
</dbReference>
<dbReference type="NCBIfam" id="NF000801">
    <property type="entry name" value="PRK00055.1-3"/>
    <property type="match status" value="1"/>
</dbReference>
<dbReference type="NCBIfam" id="TIGR02651">
    <property type="entry name" value="RNase_Z"/>
    <property type="match status" value="1"/>
</dbReference>
<dbReference type="PANTHER" id="PTHR46018">
    <property type="entry name" value="ZINC PHOSPHODIESTERASE ELAC PROTEIN 1"/>
    <property type="match status" value="1"/>
</dbReference>
<dbReference type="PANTHER" id="PTHR46018:SF2">
    <property type="entry name" value="ZINC PHOSPHODIESTERASE ELAC PROTEIN 1"/>
    <property type="match status" value="1"/>
</dbReference>
<dbReference type="Pfam" id="PF00753">
    <property type="entry name" value="Lactamase_B"/>
    <property type="match status" value="1"/>
</dbReference>
<dbReference type="Pfam" id="PF12706">
    <property type="entry name" value="Lactamase_B_2"/>
    <property type="match status" value="1"/>
</dbReference>
<dbReference type="SUPFAM" id="SSF56281">
    <property type="entry name" value="Metallo-hydrolase/oxidoreductase"/>
    <property type="match status" value="1"/>
</dbReference>
<accession>Q1DEJ2</accession>
<name>RNZ_MYXXD</name>
<reference key="1">
    <citation type="journal article" date="2006" name="Proc. Natl. Acad. Sci. U.S.A.">
        <title>Evolution of sensory complexity recorded in a myxobacterial genome.</title>
        <authorList>
            <person name="Goldman B.S."/>
            <person name="Nierman W.C."/>
            <person name="Kaiser D."/>
            <person name="Slater S.C."/>
            <person name="Durkin A.S."/>
            <person name="Eisen J.A."/>
            <person name="Ronning C.M."/>
            <person name="Barbazuk W.B."/>
            <person name="Blanchard M."/>
            <person name="Field C."/>
            <person name="Halling C."/>
            <person name="Hinkle G."/>
            <person name="Iartchuk O."/>
            <person name="Kim H.S."/>
            <person name="Mackenzie C."/>
            <person name="Madupu R."/>
            <person name="Miller N."/>
            <person name="Shvartsbeyn A."/>
            <person name="Sullivan S.A."/>
            <person name="Vaudin M."/>
            <person name="Wiegand R."/>
            <person name="Kaplan H.B."/>
        </authorList>
    </citation>
    <scope>NUCLEOTIDE SEQUENCE [LARGE SCALE GENOMIC DNA]</scope>
    <source>
        <strain>DK1622</strain>
    </source>
</reference>